<sequence>MPIQVLPPQLANQIAAGEVVERPASVVKELVENSLDAGATRVDIDIERGGAKLIRIRDNGCGIKKEELALALARHATSKIASLDDLEAIISLGFRGEALASISSVSRLTLTSRTAEQAEAWQAYAEGRDMDVTVKPAAHPVGTTLEVLDLFYNTPARRKFMRTEKTEFNHIDEIIRRIALARFDVTLNLSHNGKLVRQYRAVAKDGQKERRLGAICGTPFLEQALAIEWQHGDLTLRGWVADPNHTTTALTEIQYCYVNGRMMRDRLINHAIRQACEDKLGADQQPAFVLYLEIDPHQVDVNVHPAKHEVRFHQSRLVHDFIYQGVLSVLQQQTETTLPLEEIAPAPRHVPENRIAAGRNHFAVPAEPTTAREPATPRYSGGASGGNGGRQTAGGWPHAQPGYQKQQGEVYRALLQTPTTSPAPEAVAPALDGHSQSFGRVLTIVCGDCALLEHAGTIQLLSLPVAERWLRQAQLTPGQSPVCAQPLLIPLRLKVSADEKAALQKAQSLLGELGIEFQSDAQHVTIRAVPLPLRQQNLQILIPELIGYLAQQTTFATVNIAQWIARNVQSEHPQWSMAQAISLLADVERLCPQLVKAPPGGLLQPVDLHSAMNALKHE</sequence>
<proteinExistence type="inferred from homology"/>
<name>MUTL_SALPK</name>
<dbReference type="EMBL" id="FM200053">
    <property type="protein sequence ID" value="CAR62163.1"/>
    <property type="molecule type" value="Genomic_DNA"/>
</dbReference>
<dbReference type="RefSeq" id="WP_001122565.1">
    <property type="nucleotide sequence ID" value="NC_011147.1"/>
</dbReference>
<dbReference type="SMR" id="B5BKH9"/>
<dbReference type="KEGG" id="sek:SSPA3876"/>
<dbReference type="HOGENOM" id="CLU_004131_5_1_6"/>
<dbReference type="Proteomes" id="UP000001869">
    <property type="component" value="Chromosome"/>
</dbReference>
<dbReference type="GO" id="GO:0032300">
    <property type="term" value="C:mismatch repair complex"/>
    <property type="evidence" value="ECO:0007669"/>
    <property type="project" value="InterPro"/>
</dbReference>
<dbReference type="GO" id="GO:0005524">
    <property type="term" value="F:ATP binding"/>
    <property type="evidence" value="ECO:0007669"/>
    <property type="project" value="InterPro"/>
</dbReference>
<dbReference type="GO" id="GO:0016887">
    <property type="term" value="F:ATP hydrolysis activity"/>
    <property type="evidence" value="ECO:0007669"/>
    <property type="project" value="InterPro"/>
</dbReference>
<dbReference type="GO" id="GO:0140664">
    <property type="term" value="F:ATP-dependent DNA damage sensor activity"/>
    <property type="evidence" value="ECO:0007669"/>
    <property type="project" value="InterPro"/>
</dbReference>
<dbReference type="GO" id="GO:0030983">
    <property type="term" value="F:mismatched DNA binding"/>
    <property type="evidence" value="ECO:0007669"/>
    <property type="project" value="InterPro"/>
</dbReference>
<dbReference type="GO" id="GO:0006298">
    <property type="term" value="P:mismatch repair"/>
    <property type="evidence" value="ECO:0007669"/>
    <property type="project" value="UniProtKB-UniRule"/>
</dbReference>
<dbReference type="CDD" id="cd16926">
    <property type="entry name" value="HATPase_MutL-MLH-PMS-like"/>
    <property type="match status" value="1"/>
</dbReference>
<dbReference type="CDD" id="cd03482">
    <property type="entry name" value="MutL_Trans_MutL"/>
    <property type="match status" value="1"/>
</dbReference>
<dbReference type="FunFam" id="3.30.230.10:FF:000013">
    <property type="entry name" value="DNA mismatch repair endonuclease MutL"/>
    <property type="match status" value="1"/>
</dbReference>
<dbReference type="FunFam" id="3.30.565.10:FF:000003">
    <property type="entry name" value="DNA mismatch repair endonuclease MutL"/>
    <property type="match status" value="1"/>
</dbReference>
<dbReference type="FunFam" id="3.30.1370.100:FF:000002">
    <property type="entry name" value="DNA mismatch repair protein MutL"/>
    <property type="match status" value="1"/>
</dbReference>
<dbReference type="Gene3D" id="3.30.230.10">
    <property type="match status" value="1"/>
</dbReference>
<dbReference type="Gene3D" id="3.30.565.10">
    <property type="entry name" value="Histidine kinase-like ATPase, C-terminal domain"/>
    <property type="match status" value="1"/>
</dbReference>
<dbReference type="Gene3D" id="3.30.1540.20">
    <property type="entry name" value="MutL, C-terminal domain, dimerisation subdomain"/>
    <property type="match status" value="1"/>
</dbReference>
<dbReference type="Gene3D" id="3.30.1370.100">
    <property type="entry name" value="MutL, C-terminal domain, regulatory subdomain"/>
    <property type="match status" value="1"/>
</dbReference>
<dbReference type="HAMAP" id="MF_00149">
    <property type="entry name" value="DNA_mis_repair"/>
    <property type="match status" value="1"/>
</dbReference>
<dbReference type="InterPro" id="IPR014762">
    <property type="entry name" value="DNA_mismatch_repair_CS"/>
</dbReference>
<dbReference type="InterPro" id="IPR020667">
    <property type="entry name" value="DNA_mismatch_repair_MutL"/>
</dbReference>
<dbReference type="InterPro" id="IPR013507">
    <property type="entry name" value="DNA_mismatch_S5_2-like"/>
</dbReference>
<dbReference type="InterPro" id="IPR036890">
    <property type="entry name" value="HATPase_C_sf"/>
</dbReference>
<dbReference type="InterPro" id="IPR002099">
    <property type="entry name" value="MutL/Mlh/PMS"/>
</dbReference>
<dbReference type="InterPro" id="IPR038973">
    <property type="entry name" value="MutL/Mlh/Pms-like"/>
</dbReference>
<dbReference type="InterPro" id="IPR014790">
    <property type="entry name" value="MutL_C"/>
</dbReference>
<dbReference type="InterPro" id="IPR042120">
    <property type="entry name" value="MutL_C_dimsub"/>
</dbReference>
<dbReference type="InterPro" id="IPR042121">
    <property type="entry name" value="MutL_C_regsub"/>
</dbReference>
<dbReference type="InterPro" id="IPR037198">
    <property type="entry name" value="MutL_C_sf"/>
</dbReference>
<dbReference type="InterPro" id="IPR020568">
    <property type="entry name" value="Ribosomal_Su5_D2-typ_SF"/>
</dbReference>
<dbReference type="InterPro" id="IPR014721">
    <property type="entry name" value="Ribsml_uS5_D2-typ_fold_subgr"/>
</dbReference>
<dbReference type="NCBIfam" id="TIGR00585">
    <property type="entry name" value="mutl"/>
    <property type="match status" value="1"/>
</dbReference>
<dbReference type="NCBIfam" id="NF000948">
    <property type="entry name" value="PRK00095.1-1"/>
    <property type="match status" value="1"/>
</dbReference>
<dbReference type="PANTHER" id="PTHR10073">
    <property type="entry name" value="DNA MISMATCH REPAIR PROTEIN MLH, PMS, MUTL"/>
    <property type="match status" value="1"/>
</dbReference>
<dbReference type="PANTHER" id="PTHR10073:SF12">
    <property type="entry name" value="DNA MISMATCH REPAIR PROTEIN MLH1"/>
    <property type="match status" value="1"/>
</dbReference>
<dbReference type="Pfam" id="PF01119">
    <property type="entry name" value="DNA_mis_repair"/>
    <property type="match status" value="1"/>
</dbReference>
<dbReference type="Pfam" id="PF13589">
    <property type="entry name" value="HATPase_c_3"/>
    <property type="match status" value="1"/>
</dbReference>
<dbReference type="Pfam" id="PF08676">
    <property type="entry name" value="MutL_C"/>
    <property type="match status" value="1"/>
</dbReference>
<dbReference type="SMART" id="SM01340">
    <property type="entry name" value="DNA_mis_repair"/>
    <property type="match status" value="1"/>
</dbReference>
<dbReference type="SMART" id="SM00853">
    <property type="entry name" value="MutL_C"/>
    <property type="match status" value="1"/>
</dbReference>
<dbReference type="SUPFAM" id="SSF55874">
    <property type="entry name" value="ATPase domain of HSP90 chaperone/DNA topoisomerase II/histidine kinase"/>
    <property type="match status" value="1"/>
</dbReference>
<dbReference type="SUPFAM" id="SSF118116">
    <property type="entry name" value="DNA mismatch repair protein MutL"/>
    <property type="match status" value="1"/>
</dbReference>
<dbReference type="SUPFAM" id="SSF54211">
    <property type="entry name" value="Ribosomal protein S5 domain 2-like"/>
    <property type="match status" value="1"/>
</dbReference>
<dbReference type="PROSITE" id="PS00058">
    <property type="entry name" value="DNA_MISMATCH_REPAIR_1"/>
    <property type="match status" value="1"/>
</dbReference>
<comment type="function">
    <text evidence="1">This protein is involved in the repair of mismatches in DNA. It is required for dam-dependent methyl-directed DNA mismatch repair. May act as a 'molecular matchmaker', a protein that promotes the formation of a stable complex between two or more DNA-binding proteins in an ATP-dependent manner without itself being part of a final effector complex.</text>
</comment>
<comment type="similarity">
    <text evidence="1">Belongs to the DNA mismatch repair MutL/HexB family.</text>
</comment>
<evidence type="ECO:0000255" key="1">
    <source>
        <dbReference type="HAMAP-Rule" id="MF_00149"/>
    </source>
</evidence>
<evidence type="ECO:0000256" key="2">
    <source>
        <dbReference type="SAM" id="MobiDB-lite"/>
    </source>
</evidence>
<keyword id="KW-0227">DNA damage</keyword>
<keyword id="KW-0234">DNA repair</keyword>
<accession>B5BKH9</accession>
<protein>
    <recommendedName>
        <fullName evidence="1">DNA mismatch repair protein MutL</fullName>
    </recommendedName>
</protein>
<gene>
    <name evidence="1" type="primary">mutL</name>
    <name type="ordered locus">SSPA3876</name>
</gene>
<feature type="chain" id="PRO_1000096685" description="DNA mismatch repair protein MutL">
    <location>
        <begin position="1"/>
        <end position="618"/>
    </location>
</feature>
<feature type="region of interest" description="Disordered" evidence="2">
    <location>
        <begin position="367"/>
        <end position="402"/>
    </location>
</feature>
<feature type="compositionally biased region" description="Gly residues" evidence="2">
    <location>
        <begin position="382"/>
        <end position="392"/>
    </location>
</feature>
<reference key="1">
    <citation type="journal article" date="2009" name="BMC Genomics">
        <title>Pseudogene accumulation in the evolutionary histories of Salmonella enterica serovars Paratyphi A and Typhi.</title>
        <authorList>
            <person name="Holt K.E."/>
            <person name="Thomson N.R."/>
            <person name="Wain J."/>
            <person name="Langridge G.C."/>
            <person name="Hasan R."/>
            <person name="Bhutta Z.A."/>
            <person name="Quail M.A."/>
            <person name="Norbertczak H."/>
            <person name="Walker D."/>
            <person name="Simmonds M."/>
            <person name="White B."/>
            <person name="Bason N."/>
            <person name="Mungall K."/>
            <person name="Dougan G."/>
            <person name="Parkhill J."/>
        </authorList>
    </citation>
    <scope>NUCLEOTIDE SEQUENCE [LARGE SCALE GENOMIC DNA]</scope>
    <source>
        <strain>AKU_12601</strain>
    </source>
</reference>
<organism>
    <name type="scientific">Salmonella paratyphi A (strain AKU_12601)</name>
    <dbReference type="NCBI Taxonomy" id="554290"/>
    <lineage>
        <taxon>Bacteria</taxon>
        <taxon>Pseudomonadati</taxon>
        <taxon>Pseudomonadota</taxon>
        <taxon>Gammaproteobacteria</taxon>
        <taxon>Enterobacterales</taxon>
        <taxon>Enterobacteriaceae</taxon>
        <taxon>Salmonella</taxon>
    </lineage>
</organism>